<comment type="function">
    <text evidence="1">Catalyzes the initial step of the lipid cycle reactions in the biosynthesis of the cell wall peptidoglycan: transfers peptidoglycan precursor phospho-MurNAc-pentapeptide from UDP-MurNAc-pentapeptide onto the lipid carrier undecaprenyl phosphate, yielding undecaprenyl-pyrophosphoryl-MurNAc-pentapeptide, known as lipid I.</text>
</comment>
<comment type="catalytic activity">
    <reaction evidence="1">
        <text>UDP-N-acetyl-alpha-D-muramoyl-L-alanyl-gamma-D-glutamyl-meso-2,6-diaminopimeloyl-D-alanyl-D-alanine + di-trans,octa-cis-undecaprenyl phosphate = di-trans,octa-cis-undecaprenyl diphospho-N-acetyl-alpha-D-muramoyl-L-alanyl-D-glutamyl-meso-2,6-diaminopimeloyl-D-alanyl-D-alanine + UMP</text>
        <dbReference type="Rhea" id="RHEA:28386"/>
        <dbReference type="ChEBI" id="CHEBI:57865"/>
        <dbReference type="ChEBI" id="CHEBI:60392"/>
        <dbReference type="ChEBI" id="CHEBI:61386"/>
        <dbReference type="ChEBI" id="CHEBI:61387"/>
        <dbReference type="EC" id="2.7.8.13"/>
    </reaction>
</comment>
<comment type="cofactor">
    <cofactor evidence="1">
        <name>Mg(2+)</name>
        <dbReference type="ChEBI" id="CHEBI:18420"/>
    </cofactor>
</comment>
<comment type="pathway">
    <text evidence="1">Cell wall biogenesis; peptidoglycan biosynthesis.</text>
</comment>
<comment type="subcellular location">
    <subcellularLocation>
        <location evidence="1">Cell membrane</location>
        <topology evidence="1">Multi-pass membrane protein</topology>
    </subcellularLocation>
</comment>
<comment type="similarity">
    <text evidence="1">Belongs to the glycosyltransferase 4 family. MraY subfamily.</text>
</comment>
<name>MRAY_BACSU</name>
<sequence>MLEQVILFTILMGFLISVLLSPILIPFLRRLKFGQSIREEGPKSHQKKSGTPTMGGVMIILSIIVTTIVMTQKFSEISPEMVLLLFVTLGYGLLGFLDDYIKVVMKRNLGLTSKQKLIGQIIIAVVFYAVYHYYNFATDIRIPGTDLSFDLGWAYFILVLFMLVGGSNAVNLTDGLDGLLSGTAAIAFGAFAILAWNQSQYDVAIFSVAVVGAVLGFLVFNAHPAKVFMGDTGSLALGGAIVTIAILTKLEILLVIIGGVFVIETLSVILQVISFKTTGKRIFKMSPLHHHYELVGWSEWRVVVTFWAAGLLLAVLGIYIEVWL</sequence>
<proteinExistence type="inferred from homology"/>
<protein>
    <recommendedName>
        <fullName evidence="1">Phospho-N-acetylmuramoyl-pentapeptide-transferase</fullName>
        <ecNumber evidence="1">2.7.8.13</ecNumber>
    </recommendedName>
    <alternativeName>
        <fullName evidence="1">UDP-MurNAc-pentapeptide phosphotransferase</fullName>
    </alternativeName>
</protein>
<gene>
    <name evidence="1" type="primary">mraY</name>
    <name type="ordered locus">BSU15190</name>
</gene>
<feature type="chain" id="PRO_0000108783" description="Phospho-N-acetylmuramoyl-pentapeptide-transferase">
    <location>
        <begin position="1"/>
        <end position="324"/>
    </location>
</feature>
<feature type="transmembrane region" description="Helical" evidence="1">
    <location>
        <begin position="5"/>
        <end position="25"/>
    </location>
</feature>
<feature type="transmembrane region" description="Helical" evidence="1">
    <location>
        <begin position="50"/>
        <end position="70"/>
    </location>
</feature>
<feature type="transmembrane region" description="Helical" evidence="1">
    <location>
        <begin position="77"/>
        <end position="97"/>
    </location>
</feature>
<feature type="transmembrane region" description="Helical" evidence="1">
    <location>
        <begin position="117"/>
        <end position="137"/>
    </location>
</feature>
<feature type="transmembrane region" description="Helical" evidence="1">
    <location>
        <begin position="147"/>
        <end position="167"/>
    </location>
</feature>
<feature type="transmembrane region" description="Helical" evidence="1">
    <location>
        <begin position="176"/>
        <end position="196"/>
    </location>
</feature>
<feature type="transmembrane region" description="Helical" evidence="1">
    <location>
        <begin position="203"/>
        <end position="223"/>
    </location>
</feature>
<feature type="transmembrane region" description="Helical" evidence="1">
    <location>
        <begin position="227"/>
        <end position="247"/>
    </location>
</feature>
<feature type="transmembrane region" description="Helical" evidence="1">
    <location>
        <begin position="250"/>
        <end position="270"/>
    </location>
</feature>
<feature type="transmembrane region" description="Helical" evidence="1">
    <location>
        <begin position="302"/>
        <end position="322"/>
    </location>
</feature>
<feature type="sequence conflict" description="In Ref. 1; CAA78768." evidence="2" ref="1">
    <original>AH</original>
    <variation>RD</variation>
    <location>
        <begin position="222"/>
        <end position="223"/>
    </location>
</feature>
<reference key="1">
    <citation type="journal article" date="1993" name="J. Gen. Microbiol.">
        <title>DNA sequence of the murE-murD region of Bacillus subtilis 168.</title>
        <authorList>
            <person name="Daniel R.A."/>
            <person name="Errington J."/>
        </authorList>
    </citation>
    <scope>NUCLEOTIDE SEQUENCE [GENOMIC DNA]</scope>
    <source>
        <strain>168</strain>
    </source>
</reference>
<reference key="2">
    <citation type="journal article" date="1997" name="Nature">
        <title>The complete genome sequence of the Gram-positive bacterium Bacillus subtilis.</title>
        <authorList>
            <person name="Kunst F."/>
            <person name="Ogasawara N."/>
            <person name="Moszer I."/>
            <person name="Albertini A.M."/>
            <person name="Alloni G."/>
            <person name="Azevedo V."/>
            <person name="Bertero M.G."/>
            <person name="Bessieres P."/>
            <person name="Bolotin A."/>
            <person name="Borchert S."/>
            <person name="Borriss R."/>
            <person name="Boursier L."/>
            <person name="Brans A."/>
            <person name="Braun M."/>
            <person name="Brignell S.C."/>
            <person name="Bron S."/>
            <person name="Brouillet S."/>
            <person name="Bruschi C.V."/>
            <person name="Caldwell B."/>
            <person name="Capuano V."/>
            <person name="Carter N.M."/>
            <person name="Choi S.-K."/>
            <person name="Codani J.-J."/>
            <person name="Connerton I.F."/>
            <person name="Cummings N.J."/>
            <person name="Daniel R.A."/>
            <person name="Denizot F."/>
            <person name="Devine K.M."/>
            <person name="Duesterhoeft A."/>
            <person name="Ehrlich S.D."/>
            <person name="Emmerson P.T."/>
            <person name="Entian K.-D."/>
            <person name="Errington J."/>
            <person name="Fabret C."/>
            <person name="Ferrari E."/>
            <person name="Foulger D."/>
            <person name="Fritz C."/>
            <person name="Fujita M."/>
            <person name="Fujita Y."/>
            <person name="Fuma S."/>
            <person name="Galizzi A."/>
            <person name="Galleron N."/>
            <person name="Ghim S.-Y."/>
            <person name="Glaser P."/>
            <person name="Goffeau A."/>
            <person name="Golightly E.J."/>
            <person name="Grandi G."/>
            <person name="Guiseppi G."/>
            <person name="Guy B.J."/>
            <person name="Haga K."/>
            <person name="Haiech J."/>
            <person name="Harwood C.R."/>
            <person name="Henaut A."/>
            <person name="Hilbert H."/>
            <person name="Holsappel S."/>
            <person name="Hosono S."/>
            <person name="Hullo M.-F."/>
            <person name="Itaya M."/>
            <person name="Jones L.-M."/>
            <person name="Joris B."/>
            <person name="Karamata D."/>
            <person name="Kasahara Y."/>
            <person name="Klaerr-Blanchard M."/>
            <person name="Klein C."/>
            <person name="Kobayashi Y."/>
            <person name="Koetter P."/>
            <person name="Koningstein G."/>
            <person name="Krogh S."/>
            <person name="Kumano M."/>
            <person name="Kurita K."/>
            <person name="Lapidus A."/>
            <person name="Lardinois S."/>
            <person name="Lauber J."/>
            <person name="Lazarevic V."/>
            <person name="Lee S.-M."/>
            <person name="Levine A."/>
            <person name="Liu H."/>
            <person name="Masuda S."/>
            <person name="Mauel C."/>
            <person name="Medigue C."/>
            <person name="Medina N."/>
            <person name="Mellado R.P."/>
            <person name="Mizuno M."/>
            <person name="Moestl D."/>
            <person name="Nakai S."/>
            <person name="Noback M."/>
            <person name="Noone D."/>
            <person name="O'Reilly M."/>
            <person name="Ogawa K."/>
            <person name="Ogiwara A."/>
            <person name="Oudega B."/>
            <person name="Park S.-H."/>
            <person name="Parro V."/>
            <person name="Pohl T.M."/>
            <person name="Portetelle D."/>
            <person name="Porwollik S."/>
            <person name="Prescott A.M."/>
            <person name="Presecan E."/>
            <person name="Pujic P."/>
            <person name="Purnelle B."/>
            <person name="Rapoport G."/>
            <person name="Rey M."/>
            <person name="Reynolds S."/>
            <person name="Rieger M."/>
            <person name="Rivolta C."/>
            <person name="Rocha E."/>
            <person name="Roche B."/>
            <person name="Rose M."/>
            <person name="Sadaie Y."/>
            <person name="Sato T."/>
            <person name="Scanlan E."/>
            <person name="Schleich S."/>
            <person name="Schroeter R."/>
            <person name="Scoffone F."/>
            <person name="Sekiguchi J."/>
            <person name="Sekowska A."/>
            <person name="Seror S.J."/>
            <person name="Serror P."/>
            <person name="Shin B.-S."/>
            <person name="Soldo B."/>
            <person name="Sorokin A."/>
            <person name="Tacconi E."/>
            <person name="Takagi T."/>
            <person name="Takahashi H."/>
            <person name="Takemaru K."/>
            <person name="Takeuchi M."/>
            <person name="Tamakoshi A."/>
            <person name="Tanaka T."/>
            <person name="Terpstra P."/>
            <person name="Tognoni A."/>
            <person name="Tosato V."/>
            <person name="Uchiyama S."/>
            <person name="Vandenbol M."/>
            <person name="Vannier F."/>
            <person name="Vassarotti A."/>
            <person name="Viari A."/>
            <person name="Wambutt R."/>
            <person name="Wedler E."/>
            <person name="Wedler H."/>
            <person name="Weitzenegger T."/>
            <person name="Winters P."/>
            <person name="Wipat A."/>
            <person name="Yamamoto H."/>
            <person name="Yamane K."/>
            <person name="Yasumoto K."/>
            <person name="Yata K."/>
            <person name="Yoshida K."/>
            <person name="Yoshikawa H.-F."/>
            <person name="Zumstein E."/>
            <person name="Yoshikawa H."/>
            <person name="Danchin A."/>
        </authorList>
    </citation>
    <scope>NUCLEOTIDE SEQUENCE [LARGE SCALE GENOMIC DNA]</scope>
    <source>
        <strain>168</strain>
    </source>
</reference>
<reference key="3">
    <citation type="journal article" date="2009" name="Microbiology">
        <title>From a consortium sequence to a unified sequence: the Bacillus subtilis 168 reference genome a decade later.</title>
        <authorList>
            <person name="Barbe V."/>
            <person name="Cruveiller S."/>
            <person name="Kunst F."/>
            <person name="Lenoble P."/>
            <person name="Meurice G."/>
            <person name="Sekowska A."/>
            <person name="Vallenet D."/>
            <person name="Wang T."/>
            <person name="Moszer I."/>
            <person name="Medigue C."/>
            <person name="Danchin A."/>
        </authorList>
    </citation>
    <scope>SEQUENCE REVISION TO 222-223</scope>
</reference>
<evidence type="ECO:0000255" key="1">
    <source>
        <dbReference type="HAMAP-Rule" id="MF_00038"/>
    </source>
</evidence>
<evidence type="ECO:0000305" key="2"/>
<dbReference type="EC" id="2.7.8.13" evidence="1"/>
<dbReference type="EMBL" id="Z15056">
    <property type="protein sequence ID" value="CAA78768.1"/>
    <property type="molecule type" value="Genomic_DNA"/>
</dbReference>
<dbReference type="EMBL" id="AL009126">
    <property type="protein sequence ID" value="CAB13392.2"/>
    <property type="molecule type" value="Genomic_DNA"/>
</dbReference>
<dbReference type="PIR" id="C47691">
    <property type="entry name" value="C47691"/>
</dbReference>
<dbReference type="RefSeq" id="NP_389402.2">
    <property type="nucleotide sequence ID" value="NC_000964.3"/>
</dbReference>
<dbReference type="RefSeq" id="WP_003232192.1">
    <property type="nucleotide sequence ID" value="NZ_OZ025638.1"/>
</dbReference>
<dbReference type="SMR" id="Q03521"/>
<dbReference type="FunCoup" id="Q03521">
    <property type="interactions" value="638"/>
</dbReference>
<dbReference type="STRING" id="224308.BSU15190"/>
<dbReference type="BindingDB" id="Q03521"/>
<dbReference type="ChEMBL" id="CHEMBL1075151"/>
<dbReference type="SwissLipids" id="SLP:000001812"/>
<dbReference type="PaxDb" id="224308-BSU15190"/>
<dbReference type="EnsemblBacteria" id="CAB13392">
    <property type="protein sequence ID" value="CAB13392"/>
    <property type="gene ID" value="BSU_15190"/>
</dbReference>
<dbReference type="GeneID" id="939856"/>
<dbReference type="KEGG" id="bsu:BSU15190"/>
<dbReference type="PATRIC" id="fig|224308.179.peg.1657"/>
<dbReference type="eggNOG" id="COG0472">
    <property type="taxonomic scope" value="Bacteria"/>
</dbReference>
<dbReference type="InParanoid" id="Q03521"/>
<dbReference type="OrthoDB" id="9805475at2"/>
<dbReference type="PhylomeDB" id="Q03521"/>
<dbReference type="BioCyc" id="BSUB:BSU15190-MONOMER"/>
<dbReference type="BRENDA" id="2.7.8.13">
    <property type="organism ID" value="658"/>
</dbReference>
<dbReference type="SABIO-RK" id="Q03521"/>
<dbReference type="UniPathway" id="UPA00219"/>
<dbReference type="PRO" id="PR:Q03521"/>
<dbReference type="Proteomes" id="UP000001570">
    <property type="component" value="Chromosome"/>
</dbReference>
<dbReference type="GO" id="GO:0005886">
    <property type="term" value="C:plasma membrane"/>
    <property type="evidence" value="ECO:0000318"/>
    <property type="project" value="GO_Central"/>
</dbReference>
<dbReference type="GO" id="GO:0046872">
    <property type="term" value="F:metal ion binding"/>
    <property type="evidence" value="ECO:0007669"/>
    <property type="project" value="UniProtKB-KW"/>
</dbReference>
<dbReference type="GO" id="GO:0008963">
    <property type="term" value="F:phospho-N-acetylmuramoyl-pentapeptide-transferase activity"/>
    <property type="evidence" value="ECO:0007669"/>
    <property type="project" value="UniProtKB-UniRule"/>
</dbReference>
<dbReference type="GO" id="GO:0016780">
    <property type="term" value="F:phosphotransferase activity, for other substituted phosphate groups"/>
    <property type="evidence" value="ECO:0000318"/>
    <property type="project" value="GO_Central"/>
</dbReference>
<dbReference type="GO" id="GO:0051992">
    <property type="term" value="F:UDP-N-acetylmuramoyl-L-alanyl-D-glutamyl-meso-2,6-diaminopimelyl-D-alanyl-D-alanine:undecaprenyl-phosphate transferase activity"/>
    <property type="evidence" value="ECO:0007669"/>
    <property type="project" value="RHEA"/>
</dbReference>
<dbReference type="GO" id="GO:0051301">
    <property type="term" value="P:cell division"/>
    <property type="evidence" value="ECO:0007669"/>
    <property type="project" value="UniProtKB-KW"/>
</dbReference>
<dbReference type="GO" id="GO:0044038">
    <property type="term" value="P:cell wall macromolecule biosynthetic process"/>
    <property type="evidence" value="ECO:0000318"/>
    <property type="project" value="GO_Central"/>
</dbReference>
<dbReference type="GO" id="GO:0071555">
    <property type="term" value="P:cell wall organization"/>
    <property type="evidence" value="ECO:0000318"/>
    <property type="project" value="GO_Central"/>
</dbReference>
<dbReference type="GO" id="GO:0009252">
    <property type="term" value="P:peptidoglycan biosynthetic process"/>
    <property type="evidence" value="ECO:0007669"/>
    <property type="project" value="UniProtKB-UniRule"/>
</dbReference>
<dbReference type="GO" id="GO:0008360">
    <property type="term" value="P:regulation of cell shape"/>
    <property type="evidence" value="ECO:0007669"/>
    <property type="project" value="UniProtKB-KW"/>
</dbReference>
<dbReference type="CDD" id="cd06852">
    <property type="entry name" value="GT_MraY"/>
    <property type="match status" value="1"/>
</dbReference>
<dbReference type="HAMAP" id="MF_00038">
    <property type="entry name" value="MraY"/>
    <property type="match status" value="1"/>
</dbReference>
<dbReference type="InterPro" id="IPR000715">
    <property type="entry name" value="Glycosyl_transferase_4"/>
</dbReference>
<dbReference type="InterPro" id="IPR003524">
    <property type="entry name" value="PNAcMuramoyl-5peptid_Trfase"/>
</dbReference>
<dbReference type="InterPro" id="IPR018480">
    <property type="entry name" value="PNAcMuramoyl-5peptid_Trfase_CS"/>
</dbReference>
<dbReference type="NCBIfam" id="TIGR00445">
    <property type="entry name" value="mraY"/>
    <property type="match status" value="1"/>
</dbReference>
<dbReference type="PANTHER" id="PTHR22926">
    <property type="entry name" value="PHOSPHO-N-ACETYLMURAMOYL-PENTAPEPTIDE-TRANSFERASE"/>
    <property type="match status" value="1"/>
</dbReference>
<dbReference type="PANTHER" id="PTHR22926:SF5">
    <property type="entry name" value="PHOSPHO-N-ACETYLMURAMOYL-PENTAPEPTIDE-TRANSFERASE HOMOLOG"/>
    <property type="match status" value="1"/>
</dbReference>
<dbReference type="Pfam" id="PF00953">
    <property type="entry name" value="Glycos_transf_4"/>
    <property type="match status" value="1"/>
</dbReference>
<dbReference type="Pfam" id="PF10555">
    <property type="entry name" value="MraY_sig1"/>
    <property type="match status" value="1"/>
</dbReference>
<dbReference type="PROSITE" id="PS01347">
    <property type="entry name" value="MRAY_1"/>
    <property type="match status" value="1"/>
</dbReference>
<dbReference type="PROSITE" id="PS01348">
    <property type="entry name" value="MRAY_2"/>
    <property type="match status" value="1"/>
</dbReference>
<accession>Q03521</accession>
<organism>
    <name type="scientific">Bacillus subtilis (strain 168)</name>
    <dbReference type="NCBI Taxonomy" id="224308"/>
    <lineage>
        <taxon>Bacteria</taxon>
        <taxon>Bacillati</taxon>
        <taxon>Bacillota</taxon>
        <taxon>Bacilli</taxon>
        <taxon>Bacillales</taxon>
        <taxon>Bacillaceae</taxon>
        <taxon>Bacillus</taxon>
    </lineage>
</organism>
<keyword id="KW-0131">Cell cycle</keyword>
<keyword id="KW-0132">Cell division</keyword>
<keyword id="KW-1003">Cell membrane</keyword>
<keyword id="KW-0133">Cell shape</keyword>
<keyword id="KW-0961">Cell wall biogenesis/degradation</keyword>
<keyword id="KW-0460">Magnesium</keyword>
<keyword id="KW-0472">Membrane</keyword>
<keyword id="KW-0479">Metal-binding</keyword>
<keyword id="KW-0573">Peptidoglycan synthesis</keyword>
<keyword id="KW-1185">Reference proteome</keyword>
<keyword id="KW-0808">Transferase</keyword>
<keyword id="KW-0812">Transmembrane</keyword>
<keyword id="KW-1133">Transmembrane helix</keyword>